<protein>
    <recommendedName>
        <fullName evidence="1">Ion-translocating oxidoreductase complex subunit C</fullName>
        <ecNumber evidence="1">7.-.-.-</ecNumber>
    </recommendedName>
    <alternativeName>
        <fullName evidence="1">Rsx electron transport complex subunit C</fullName>
    </alternativeName>
</protein>
<comment type="function">
    <text evidence="1">Part of a membrane-bound complex that couples electron transfer with translocation of ions across the membrane. Required to maintain the reduced state of SoxR.</text>
</comment>
<comment type="cofactor">
    <cofactor evidence="1">
        <name>[4Fe-4S] cluster</name>
        <dbReference type="ChEBI" id="CHEBI:49883"/>
    </cofactor>
    <text evidence="1">Binds 2 [4Fe-4S] clusters per subunit.</text>
</comment>
<comment type="subunit">
    <text evidence="1">The complex is composed of six subunits: RsxA, RsxB, RsxC, RsxD, RsxE and RsxG.</text>
</comment>
<comment type="subcellular location">
    <subcellularLocation>
        <location evidence="1">Cell inner membrane</location>
        <topology evidence="1">Peripheral membrane protein</topology>
    </subcellularLocation>
</comment>
<comment type="similarity">
    <text evidence="1">Belongs to the 4Fe4S bacterial-type ferredoxin family. RnfC subfamily.</text>
</comment>
<reference key="1">
    <citation type="journal article" date="2005" name="Nucleic Acids Res.">
        <title>Genome dynamics and diversity of Shigella species, the etiologic agents of bacillary dysentery.</title>
        <authorList>
            <person name="Yang F."/>
            <person name="Yang J."/>
            <person name="Zhang X."/>
            <person name="Chen L."/>
            <person name="Jiang Y."/>
            <person name="Yan Y."/>
            <person name="Tang X."/>
            <person name="Wang J."/>
            <person name="Xiong Z."/>
            <person name="Dong J."/>
            <person name="Xue Y."/>
            <person name="Zhu Y."/>
            <person name="Xu X."/>
            <person name="Sun L."/>
            <person name="Chen S."/>
            <person name="Nie H."/>
            <person name="Peng J."/>
            <person name="Xu J."/>
            <person name="Wang Y."/>
            <person name="Yuan Z."/>
            <person name="Wen Y."/>
            <person name="Yao Z."/>
            <person name="Shen Y."/>
            <person name="Qiang B."/>
            <person name="Hou Y."/>
            <person name="Yu J."/>
            <person name="Jin Q."/>
        </authorList>
    </citation>
    <scope>NUCLEOTIDE SEQUENCE [LARGE SCALE GENOMIC DNA]</scope>
    <source>
        <strain>Ss046</strain>
    </source>
</reference>
<name>RSXC_SHISS</name>
<sequence length="740" mass="80252">MLKLFSAFRKNKIWDFNGGIHPPEMKTQSNGTPLRQVPLAQRFVIPLKQHIGAEGELCVSVGDKVLRGQPLTRGRGKMLPVHAPTSGTVTAIAPHSTAHPSALAELSVIIDADGEDCWIPRDGWADYRTRSREELIERIHQFGVAGLGGAGFPTGVKLQGGGDKIETLIINAAECEPYITADDRLMQDCAAQVVEGIRILAHILQPREILIGIEDNKPQAISMLRAVLADSNDISLRVIPTKYPSGGAKQLTYILTGKQVPHGGRSSDIGVLMQNVGTAYAVKRAVIDGEPITERVVTLTGEAIARPGNVWARLGTPVRHLLNDAGFCPSADQMVIMGGPLMGFTLPWLDVPVVKITNCLLAPSANELGEPQEEQSCIRCSACADACPADLLPQQLYWFSKGQQHDKATTHNIADCIECGACAWVCPSNIPLVQYFRQEKAEIAAIRQEEKRAAEAKARFEARQARLEREKAARLERHKSAAVQPAAKDKDAIAAALARVKEKQAQATQPIVIKAGERPDNSAIIAAREARKAQARAKQAELQQTNDAATVADPRKTAVEAAIARAKARKLEQQQANAEPEEQVDPRKAAVEAAIARAKARKLEQQQANAEPEEQVDPRKAAVEAAIARAKARKLEQQQTNAEPEEQVDPRKAAVEAAIARAKARKLEQQQANAEPEEQVDPRKAAVEAAIARAKARKLEQQQTNAEPEEQVDPRKAAVAAAIARAQAKKAAQQKVVNED</sequence>
<evidence type="ECO:0000255" key="1">
    <source>
        <dbReference type="HAMAP-Rule" id="MF_00461"/>
    </source>
</evidence>
<evidence type="ECO:0000256" key="2">
    <source>
        <dbReference type="SAM" id="MobiDB-lite"/>
    </source>
</evidence>
<proteinExistence type="inferred from homology"/>
<accession>Q3Z1Y4</accession>
<keyword id="KW-0004">4Fe-4S</keyword>
<keyword id="KW-0997">Cell inner membrane</keyword>
<keyword id="KW-1003">Cell membrane</keyword>
<keyword id="KW-0249">Electron transport</keyword>
<keyword id="KW-0408">Iron</keyword>
<keyword id="KW-0411">Iron-sulfur</keyword>
<keyword id="KW-0472">Membrane</keyword>
<keyword id="KW-0479">Metal-binding</keyword>
<keyword id="KW-1185">Reference proteome</keyword>
<keyword id="KW-0677">Repeat</keyword>
<keyword id="KW-1278">Translocase</keyword>
<keyword id="KW-0813">Transport</keyword>
<dbReference type="EC" id="7.-.-.-" evidence="1"/>
<dbReference type="EMBL" id="CP000038">
    <property type="protein sequence ID" value="AAZ88228.1"/>
    <property type="molecule type" value="Genomic_DNA"/>
</dbReference>
<dbReference type="RefSeq" id="WP_000915765.1">
    <property type="nucleotide sequence ID" value="NC_007384.1"/>
</dbReference>
<dbReference type="SMR" id="Q3Z1Y4"/>
<dbReference type="GeneID" id="93775781"/>
<dbReference type="KEGG" id="ssn:SSON_1529"/>
<dbReference type="HOGENOM" id="CLU_010808_2_1_6"/>
<dbReference type="Proteomes" id="UP000002529">
    <property type="component" value="Chromosome"/>
</dbReference>
<dbReference type="GO" id="GO:0005886">
    <property type="term" value="C:plasma membrane"/>
    <property type="evidence" value="ECO:0007669"/>
    <property type="project" value="UniProtKB-SubCell"/>
</dbReference>
<dbReference type="GO" id="GO:0051539">
    <property type="term" value="F:4 iron, 4 sulfur cluster binding"/>
    <property type="evidence" value="ECO:0007669"/>
    <property type="project" value="UniProtKB-KW"/>
</dbReference>
<dbReference type="GO" id="GO:0009055">
    <property type="term" value="F:electron transfer activity"/>
    <property type="evidence" value="ECO:0007669"/>
    <property type="project" value="InterPro"/>
</dbReference>
<dbReference type="GO" id="GO:0046872">
    <property type="term" value="F:metal ion binding"/>
    <property type="evidence" value="ECO:0007669"/>
    <property type="project" value="UniProtKB-KW"/>
</dbReference>
<dbReference type="GO" id="GO:0022900">
    <property type="term" value="P:electron transport chain"/>
    <property type="evidence" value="ECO:0007669"/>
    <property type="project" value="UniProtKB-UniRule"/>
</dbReference>
<dbReference type="Gene3D" id="3.30.70.20">
    <property type="match status" value="1"/>
</dbReference>
<dbReference type="Gene3D" id="3.40.50.11540">
    <property type="entry name" value="NADH-ubiquinone oxidoreductase 51kDa subunit"/>
    <property type="match status" value="1"/>
</dbReference>
<dbReference type="HAMAP" id="MF_00461">
    <property type="entry name" value="RsxC_RnfC"/>
    <property type="match status" value="1"/>
</dbReference>
<dbReference type="InterPro" id="IPR017896">
    <property type="entry name" value="4Fe4S_Fe-S-bd"/>
</dbReference>
<dbReference type="InterPro" id="IPR017900">
    <property type="entry name" value="4Fe4S_Fe_S_CS"/>
</dbReference>
<dbReference type="InterPro" id="IPR010208">
    <property type="entry name" value="Ion_transpt_RnfC/RsxC"/>
</dbReference>
<dbReference type="InterPro" id="IPR011538">
    <property type="entry name" value="Nuo51_FMN-bd"/>
</dbReference>
<dbReference type="InterPro" id="IPR037225">
    <property type="entry name" value="Nuo51_FMN-bd_sf"/>
</dbReference>
<dbReference type="InterPro" id="IPR026902">
    <property type="entry name" value="RnfC_N"/>
</dbReference>
<dbReference type="InterPro" id="IPR019554">
    <property type="entry name" value="Soluble_ligand-bd"/>
</dbReference>
<dbReference type="NCBIfam" id="NF003454">
    <property type="entry name" value="PRK05035.1"/>
    <property type="match status" value="1"/>
</dbReference>
<dbReference type="NCBIfam" id="TIGR01945">
    <property type="entry name" value="rnfC"/>
    <property type="match status" value="1"/>
</dbReference>
<dbReference type="PANTHER" id="PTHR43034">
    <property type="entry name" value="ION-TRANSLOCATING OXIDOREDUCTASE COMPLEX SUBUNIT C"/>
    <property type="match status" value="1"/>
</dbReference>
<dbReference type="PANTHER" id="PTHR43034:SF2">
    <property type="entry name" value="ION-TRANSLOCATING OXIDOREDUCTASE COMPLEX SUBUNIT C"/>
    <property type="match status" value="1"/>
</dbReference>
<dbReference type="Pfam" id="PF01512">
    <property type="entry name" value="Complex1_51K"/>
    <property type="match status" value="1"/>
</dbReference>
<dbReference type="Pfam" id="PF12838">
    <property type="entry name" value="Fer4_7"/>
    <property type="match status" value="1"/>
</dbReference>
<dbReference type="Pfam" id="PF13375">
    <property type="entry name" value="RnfC_N"/>
    <property type="match status" value="1"/>
</dbReference>
<dbReference type="Pfam" id="PF10531">
    <property type="entry name" value="SLBB"/>
    <property type="match status" value="1"/>
</dbReference>
<dbReference type="SUPFAM" id="SSF46548">
    <property type="entry name" value="alpha-helical ferredoxin"/>
    <property type="match status" value="1"/>
</dbReference>
<dbReference type="SUPFAM" id="SSF142019">
    <property type="entry name" value="Nqo1 FMN-binding domain-like"/>
    <property type="match status" value="1"/>
</dbReference>
<dbReference type="PROSITE" id="PS00198">
    <property type="entry name" value="4FE4S_FER_1"/>
    <property type="match status" value="2"/>
</dbReference>
<dbReference type="PROSITE" id="PS51379">
    <property type="entry name" value="4FE4S_FER_2"/>
    <property type="match status" value="2"/>
</dbReference>
<gene>
    <name evidence="1" type="primary">rsxC</name>
    <name type="ordered locus">SSON_1529</name>
</gene>
<feature type="chain" id="PRO_1000013616" description="Ion-translocating oxidoreductase complex subunit C">
    <location>
        <begin position="1"/>
        <end position="740"/>
    </location>
</feature>
<feature type="domain" description="4Fe-4S ferredoxin-type 1" evidence="1">
    <location>
        <begin position="369"/>
        <end position="397"/>
    </location>
</feature>
<feature type="domain" description="4Fe-4S ferredoxin-type 2" evidence="1">
    <location>
        <begin position="407"/>
        <end position="436"/>
    </location>
</feature>
<feature type="region of interest" description="Disordered" evidence="2">
    <location>
        <begin position="602"/>
        <end position="718"/>
    </location>
</feature>
<feature type="binding site" evidence="1">
    <location>
        <position position="377"/>
    </location>
    <ligand>
        <name>[4Fe-4S] cluster</name>
        <dbReference type="ChEBI" id="CHEBI:49883"/>
        <label>1</label>
    </ligand>
</feature>
<feature type="binding site" evidence="1">
    <location>
        <position position="380"/>
    </location>
    <ligand>
        <name>[4Fe-4S] cluster</name>
        <dbReference type="ChEBI" id="CHEBI:49883"/>
        <label>1</label>
    </ligand>
</feature>
<feature type="binding site" evidence="1">
    <location>
        <position position="383"/>
    </location>
    <ligand>
        <name>[4Fe-4S] cluster</name>
        <dbReference type="ChEBI" id="CHEBI:49883"/>
        <label>1</label>
    </ligand>
</feature>
<feature type="binding site" evidence="1">
    <location>
        <position position="387"/>
    </location>
    <ligand>
        <name>[4Fe-4S] cluster</name>
        <dbReference type="ChEBI" id="CHEBI:49883"/>
        <label>2</label>
    </ligand>
</feature>
<feature type="binding site" evidence="1">
    <location>
        <position position="416"/>
    </location>
    <ligand>
        <name>[4Fe-4S] cluster</name>
        <dbReference type="ChEBI" id="CHEBI:49883"/>
        <label>2</label>
    </ligand>
</feature>
<feature type="binding site" evidence="1">
    <location>
        <position position="419"/>
    </location>
    <ligand>
        <name>[4Fe-4S] cluster</name>
        <dbReference type="ChEBI" id="CHEBI:49883"/>
        <label>2</label>
    </ligand>
</feature>
<feature type="binding site" evidence="1">
    <location>
        <position position="422"/>
    </location>
    <ligand>
        <name>[4Fe-4S] cluster</name>
        <dbReference type="ChEBI" id="CHEBI:49883"/>
        <label>2</label>
    </ligand>
</feature>
<feature type="binding site" evidence="1">
    <location>
        <position position="426"/>
    </location>
    <ligand>
        <name>[4Fe-4S] cluster</name>
        <dbReference type="ChEBI" id="CHEBI:49883"/>
        <label>1</label>
    </ligand>
</feature>
<organism>
    <name type="scientific">Shigella sonnei (strain Ss046)</name>
    <dbReference type="NCBI Taxonomy" id="300269"/>
    <lineage>
        <taxon>Bacteria</taxon>
        <taxon>Pseudomonadati</taxon>
        <taxon>Pseudomonadota</taxon>
        <taxon>Gammaproteobacteria</taxon>
        <taxon>Enterobacterales</taxon>
        <taxon>Enterobacteriaceae</taxon>
        <taxon>Shigella</taxon>
    </lineage>
</organism>